<comment type="function">
    <text evidence="1">RNA chaperone that binds small regulatory RNA (sRNAs) and mRNAs to facilitate mRNA translational regulation in response to envelope stress, environmental stress and changes in metabolite concentrations. Also binds with high specificity to tRNAs.</text>
</comment>
<comment type="subunit">
    <text evidence="1">Homohexamer.</text>
</comment>
<comment type="similarity">
    <text evidence="1">Belongs to the Hfq family.</text>
</comment>
<keyword id="KW-1185">Reference proteome</keyword>
<keyword id="KW-0694">RNA-binding</keyword>
<keyword id="KW-0346">Stress response</keyword>
<accession>Q21W33</accession>
<evidence type="ECO:0000255" key="1">
    <source>
        <dbReference type="HAMAP-Rule" id="MF_00436"/>
    </source>
</evidence>
<evidence type="ECO:0000255" key="2">
    <source>
        <dbReference type="PROSITE-ProRule" id="PRU01346"/>
    </source>
</evidence>
<feature type="chain" id="PRO_0000265181" description="RNA-binding protein Hfq">
    <location>
        <begin position="1"/>
        <end position="82"/>
    </location>
</feature>
<feature type="domain" description="Sm" evidence="2">
    <location>
        <begin position="10"/>
        <end position="69"/>
    </location>
</feature>
<reference key="1">
    <citation type="submission" date="2006-02" db="EMBL/GenBank/DDBJ databases">
        <title>Complete sequence of chromosome of Rhodoferax ferrireducens DSM 15236.</title>
        <authorList>
            <person name="Copeland A."/>
            <person name="Lucas S."/>
            <person name="Lapidus A."/>
            <person name="Barry K."/>
            <person name="Detter J.C."/>
            <person name="Glavina del Rio T."/>
            <person name="Hammon N."/>
            <person name="Israni S."/>
            <person name="Pitluck S."/>
            <person name="Brettin T."/>
            <person name="Bruce D."/>
            <person name="Han C."/>
            <person name="Tapia R."/>
            <person name="Gilna P."/>
            <person name="Kiss H."/>
            <person name="Schmutz J."/>
            <person name="Larimer F."/>
            <person name="Land M."/>
            <person name="Kyrpides N."/>
            <person name="Ivanova N."/>
            <person name="Richardson P."/>
        </authorList>
    </citation>
    <scope>NUCLEOTIDE SEQUENCE [LARGE SCALE GENOMIC DNA]</scope>
    <source>
        <strain>ATCC BAA-621 / DSM 15236 / T118</strain>
    </source>
</reference>
<gene>
    <name evidence="1" type="primary">hfq</name>
    <name type="ordered locus">Rfer_2302</name>
</gene>
<dbReference type="EMBL" id="CP000267">
    <property type="protein sequence ID" value="ABD70020.1"/>
    <property type="molecule type" value="Genomic_DNA"/>
</dbReference>
<dbReference type="SMR" id="Q21W33"/>
<dbReference type="STRING" id="338969.Rfer_2302"/>
<dbReference type="KEGG" id="rfr:Rfer_2302"/>
<dbReference type="eggNOG" id="COG1923">
    <property type="taxonomic scope" value="Bacteria"/>
</dbReference>
<dbReference type="HOGENOM" id="CLU_113688_2_2_4"/>
<dbReference type="Proteomes" id="UP000008332">
    <property type="component" value="Chromosome"/>
</dbReference>
<dbReference type="GO" id="GO:0005829">
    <property type="term" value="C:cytosol"/>
    <property type="evidence" value="ECO:0007669"/>
    <property type="project" value="TreeGrafter"/>
</dbReference>
<dbReference type="GO" id="GO:0003723">
    <property type="term" value="F:RNA binding"/>
    <property type="evidence" value="ECO:0007669"/>
    <property type="project" value="UniProtKB-UniRule"/>
</dbReference>
<dbReference type="GO" id="GO:0006355">
    <property type="term" value="P:regulation of DNA-templated transcription"/>
    <property type="evidence" value="ECO:0007669"/>
    <property type="project" value="InterPro"/>
</dbReference>
<dbReference type="GO" id="GO:0043487">
    <property type="term" value="P:regulation of RNA stability"/>
    <property type="evidence" value="ECO:0007669"/>
    <property type="project" value="TreeGrafter"/>
</dbReference>
<dbReference type="GO" id="GO:0045974">
    <property type="term" value="P:regulation of translation, ncRNA-mediated"/>
    <property type="evidence" value="ECO:0007669"/>
    <property type="project" value="TreeGrafter"/>
</dbReference>
<dbReference type="CDD" id="cd01716">
    <property type="entry name" value="Hfq"/>
    <property type="match status" value="1"/>
</dbReference>
<dbReference type="FunFam" id="2.30.30.100:FF:000001">
    <property type="entry name" value="RNA-binding protein Hfq"/>
    <property type="match status" value="1"/>
</dbReference>
<dbReference type="Gene3D" id="2.30.30.100">
    <property type="match status" value="1"/>
</dbReference>
<dbReference type="HAMAP" id="MF_00436">
    <property type="entry name" value="Hfq"/>
    <property type="match status" value="1"/>
</dbReference>
<dbReference type="InterPro" id="IPR005001">
    <property type="entry name" value="Hfq"/>
</dbReference>
<dbReference type="InterPro" id="IPR010920">
    <property type="entry name" value="LSM_dom_sf"/>
</dbReference>
<dbReference type="InterPro" id="IPR047575">
    <property type="entry name" value="Sm"/>
</dbReference>
<dbReference type="NCBIfam" id="TIGR02383">
    <property type="entry name" value="Hfq"/>
    <property type="match status" value="1"/>
</dbReference>
<dbReference type="NCBIfam" id="NF001602">
    <property type="entry name" value="PRK00395.1"/>
    <property type="match status" value="1"/>
</dbReference>
<dbReference type="PANTHER" id="PTHR34772">
    <property type="entry name" value="RNA-BINDING PROTEIN HFQ"/>
    <property type="match status" value="1"/>
</dbReference>
<dbReference type="PANTHER" id="PTHR34772:SF1">
    <property type="entry name" value="RNA-BINDING PROTEIN HFQ"/>
    <property type="match status" value="1"/>
</dbReference>
<dbReference type="Pfam" id="PF17209">
    <property type="entry name" value="Hfq"/>
    <property type="match status" value="1"/>
</dbReference>
<dbReference type="SUPFAM" id="SSF50182">
    <property type="entry name" value="Sm-like ribonucleoproteins"/>
    <property type="match status" value="1"/>
</dbReference>
<dbReference type="PROSITE" id="PS52002">
    <property type="entry name" value="SM"/>
    <property type="match status" value="1"/>
</dbReference>
<proteinExistence type="inferred from homology"/>
<protein>
    <recommendedName>
        <fullName evidence="1">RNA-binding protein Hfq</fullName>
    </recommendedName>
</protein>
<organism>
    <name type="scientific">Albidiferax ferrireducens (strain ATCC BAA-621 / DSM 15236 / T118)</name>
    <name type="common">Rhodoferax ferrireducens</name>
    <dbReference type="NCBI Taxonomy" id="338969"/>
    <lineage>
        <taxon>Bacteria</taxon>
        <taxon>Pseudomonadati</taxon>
        <taxon>Pseudomonadota</taxon>
        <taxon>Betaproteobacteria</taxon>
        <taxon>Burkholderiales</taxon>
        <taxon>Comamonadaceae</taxon>
        <taxon>Rhodoferax</taxon>
    </lineage>
</organism>
<sequence length="82" mass="9056">MSNKGQLLQDPFLNALRREHVPVSIYLVNGIKLQGQIESFDQYVVLLRNTVTQMVYKHAISTIVPGRAVNFSTGEGDEPAAA</sequence>
<name>HFQ_ALBFT</name>